<protein>
    <recommendedName>
        <fullName evidence="1">Trigger factor</fullName>
        <shortName evidence="1">TF</shortName>
        <ecNumber evidence="1">5.2.1.8</ecNumber>
    </recommendedName>
    <alternativeName>
        <fullName evidence="1">PPIase</fullName>
    </alternativeName>
</protein>
<evidence type="ECO:0000255" key="1">
    <source>
        <dbReference type="HAMAP-Rule" id="MF_00303"/>
    </source>
</evidence>
<dbReference type="EC" id="5.2.1.8" evidence="1"/>
<dbReference type="EMBL" id="CP001392">
    <property type="protein sequence ID" value="ACM32604.1"/>
    <property type="molecule type" value="Genomic_DNA"/>
</dbReference>
<dbReference type="RefSeq" id="WP_011804640.1">
    <property type="nucleotide sequence ID" value="NC_011992.1"/>
</dbReference>
<dbReference type="SMR" id="B9MG13"/>
<dbReference type="GeneID" id="84682077"/>
<dbReference type="KEGG" id="dia:Dtpsy_1127"/>
<dbReference type="eggNOG" id="COG0544">
    <property type="taxonomic scope" value="Bacteria"/>
</dbReference>
<dbReference type="HOGENOM" id="CLU_033058_2_0_4"/>
<dbReference type="Proteomes" id="UP000000450">
    <property type="component" value="Chromosome"/>
</dbReference>
<dbReference type="GO" id="GO:0005737">
    <property type="term" value="C:cytoplasm"/>
    <property type="evidence" value="ECO:0007669"/>
    <property type="project" value="UniProtKB-SubCell"/>
</dbReference>
<dbReference type="GO" id="GO:0003755">
    <property type="term" value="F:peptidyl-prolyl cis-trans isomerase activity"/>
    <property type="evidence" value="ECO:0007669"/>
    <property type="project" value="UniProtKB-UniRule"/>
</dbReference>
<dbReference type="GO" id="GO:0044183">
    <property type="term" value="F:protein folding chaperone"/>
    <property type="evidence" value="ECO:0007669"/>
    <property type="project" value="TreeGrafter"/>
</dbReference>
<dbReference type="GO" id="GO:0043022">
    <property type="term" value="F:ribosome binding"/>
    <property type="evidence" value="ECO:0007669"/>
    <property type="project" value="TreeGrafter"/>
</dbReference>
<dbReference type="GO" id="GO:0051083">
    <property type="term" value="P:'de novo' cotranslational protein folding"/>
    <property type="evidence" value="ECO:0007669"/>
    <property type="project" value="TreeGrafter"/>
</dbReference>
<dbReference type="GO" id="GO:0051301">
    <property type="term" value="P:cell division"/>
    <property type="evidence" value="ECO:0007669"/>
    <property type="project" value="UniProtKB-KW"/>
</dbReference>
<dbReference type="GO" id="GO:0061077">
    <property type="term" value="P:chaperone-mediated protein folding"/>
    <property type="evidence" value="ECO:0007669"/>
    <property type="project" value="TreeGrafter"/>
</dbReference>
<dbReference type="GO" id="GO:0015031">
    <property type="term" value="P:protein transport"/>
    <property type="evidence" value="ECO:0007669"/>
    <property type="project" value="UniProtKB-UniRule"/>
</dbReference>
<dbReference type="GO" id="GO:0043335">
    <property type="term" value="P:protein unfolding"/>
    <property type="evidence" value="ECO:0007669"/>
    <property type="project" value="TreeGrafter"/>
</dbReference>
<dbReference type="FunFam" id="3.10.50.40:FF:000001">
    <property type="entry name" value="Trigger factor"/>
    <property type="match status" value="1"/>
</dbReference>
<dbReference type="Gene3D" id="3.10.50.40">
    <property type="match status" value="1"/>
</dbReference>
<dbReference type="Gene3D" id="3.30.70.1050">
    <property type="entry name" value="Trigger factor ribosome-binding domain"/>
    <property type="match status" value="1"/>
</dbReference>
<dbReference type="Gene3D" id="1.10.3120.10">
    <property type="entry name" value="Trigger factor, C-terminal domain"/>
    <property type="match status" value="1"/>
</dbReference>
<dbReference type="HAMAP" id="MF_00303">
    <property type="entry name" value="Trigger_factor_Tig"/>
    <property type="match status" value="1"/>
</dbReference>
<dbReference type="InterPro" id="IPR046357">
    <property type="entry name" value="PPIase_dom_sf"/>
</dbReference>
<dbReference type="InterPro" id="IPR001179">
    <property type="entry name" value="PPIase_FKBP_dom"/>
</dbReference>
<dbReference type="InterPro" id="IPR005215">
    <property type="entry name" value="Trig_fac"/>
</dbReference>
<dbReference type="InterPro" id="IPR008880">
    <property type="entry name" value="Trigger_fac_C"/>
</dbReference>
<dbReference type="InterPro" id="IPR037041">
    <property type="entry name" value="Trigger_fac_C_sf"/>
</dbReference>
<dbReference type="InterPro" id="IPR008881">
    <property type="entry name" value="Trigger_fac_ribosome-bd_bac"/>
</dbReference>
<dbReference type="InterPro" id="IPR036611">
    <property type="entry name" value="Trigger_fac_ribosome-bd_sf"/>
</dbReference>
<dbReference type="InterPro" id="IPR027304">
    <property type="entry name" value="Trigger_fact/SurA_dom_sf"/>
</dbReference>
<dbReference type="NCBIfam" id="TIGR00115">
    <property type="entry name" value="tig"/>
    <property type="match status" value="1"/>
</dbReference>
<dbReference type="PANTHER" id="PTHR30560">
    <property type="entry name" value="TRIGGER FACTOR CHAPERONE AND PEPTIDYL-PROLYL CIS/TRANS ISOMERASE"/>
    <property type="match status" value="1"/>
</dbReference>
<dbReference type="PANTHER" id="PTHR30560:SF3">
    <property type="entry name" value="TRIGGER FACTOR-LIKE PROTEIN TIG, CHLOROPLASTIC"/>
    <property type="match status" value="1"/>
</dbReference>
<dbReference type="Pfam" id="PF00254">
    <property type="entry name" value="FKBP_C"/>
    <property type="match status" value="1"/>
</dbReference>
<dbReference type="Pfam" id="PF05698">
    <property type="entry name" value="Trigger_C"/>
    <property type="match status" value="1"/>
</dbReference>
<dbReference type="Pfam" id="PF05697">
    <property type="entry name" value="Trigger_N"/>
    <property type="match status" value="1"/>
</dbReference>
<dbReference type="PIRSF" id="PIRSF003095">
    <property type="entry name" value="Trigger_factor"/>
    <property type="match status" value="1"/>
</dbReference>
<dbReference type="SUPFAM" id="SSF54534">
    <property type="entry name" value="FKBP-like"/>
    <property type="match status" value="1"/>
</dbReference>
<dbReference type="SUPFAM" id="SSF109998">
    <property type="entry name" value="Triger factor/SurA peptide-binding domain-like"/>
    <property type="match status" value="1"/>
</dbReference>
<dbReference type="SUPFAM" id="SSF102735">
    <property type="entry name" value="Trigger factor ribosome-binding domain"/>
    <property type="match status" value="1"/>
</dbReference>
<dbReference type="PROSITE" id="PS50059">
    <property type="entry name" value="FKBP_PPIASE"/>
    <property type="match status" value="1"/>
</dbReference>
<name>TIG_ACIET</name>
<sequence length="436" mass="48173">MAVTVETLEKLERKITLSLPLTTIQTEVDARLKRLARTVKMDGFRPGKVPMSVVAQRYGYSVQYEVLNDKVGEAFAQAANEANLRVAGQPRITEKDGAPEGEVTFDAVFEVFPEVKIGDLSTAEVEKLSAEVTDSAIDKTVDILRKQRRTFAQRALAAAAEDGDRVTVDFEGKIDGEPFQGGKAEDFQFLVGEGQMLKEFEDAVRGMKSGESKTFPLAFPEDYHGKDVAGKTADFMVTVKKIEAAHLPEVNEQLAKSLGIADGTVEGLRADIKKNLEREVKFRLLARNKQAVMDALVSKAELDLPNASVQAEIARLLEAARADLKQRGIKDADKAEIPEDVFRPQAERRVRLGLVVAELVRANNLQAKPEQLKAHVDELAASYEKPEDVVRWYFSDRNRLAEVEAVVIENNVTDFVLGQAKVNDKAVSFDELMGQA</sequence>
<gene>
    <name evidence="1" type="primary">tig</name>
    <name type="ordered locus">Dtpsy_1127</name>
</gene>
<feature type="chain" id="PRO_1000198155" description="Trigger factor">
    <location>
        <begin position="1"/>
        <end position="436"/>
    </location>
</feature>
<feature type="domain" description="PPIase FKBP-type" evidence="1">
    <location>
        <begin position="163"/>
        <end position="248"/>
    </location>
</feature>
<proteinExistence type="inferred from homology"/>
<organism>
    <name type="scientific">Acidovorax ebreus (strain TPSY)</name>
    <name type="common">Diaphorobacter sp. (strain TPSY)</name>
    <dbReference type="NCBI Taxonomy" id="535289"/>
    <lineage>
        <taxon>Bacteria</taxon>
        <taxon>Pseudomonadati</taxon>
        <taxon>Pseudomonadota</taxon>
        <taxon>Betaproteobacteria</taxon>
        <taxon>Burkholderiales</taxon>
        <taxon>Comamonadaceae</taxon>
        <taxon>Diaphorobacter</taxon>
    </lineage>
</organism>
<reference key="1">
    <citation type="submission" date="2009-01" db="EMBL/GenBank/DDBJ databases">
        <title>Complete sequence of Diaphorobacter sp. TPSY.</title>
        <authorList>
            <consortium name="US DOE Joint Genome Institute"/>
            <person name="Lucas S."/>
            <person name="Copeland A."/>
            <person name="Lapidus A."/>
            <person name="Glavina del Rio T."/>
            <person name="Tice H."/>
            <person name="Bruce D."/>
            <person name="Goodwin L."/>
            <person name="Pitluck S."/>
            <person name="Chertkov O."/>
            <person name="Brettin T."/>
            <person name="Detter J.C."/>
            <person name="Han C."/>
            <person name="Larimer F."/>
            <person name="Land M."/>
            <person name="Hauser L."/>
            <person name="Kyrpides N."/>
            <person name="Mikhailova N."/>
            <person name="Coates J.D."/>
        </authorList>
    </citation>
    <scope>NUCLEOTIDE SEQUENCE [LARGE SCALE GENOMIC DNA]</scope>
    <source>
        <strain>TPSY</strain>
    </source>
</reference>
<keyword id="KW-0131">Cell cycle</keyword>
<keyword id="KW-0132">Cell division</keyword>
<keyword id="KW-0143">Chaperone</keyword>
<keyword id="KW-0963">Cytoplasm</keyword>
<keyword id="KW-0413">Isomerase</keyword>
<keyword id="KW-1185">Reference proteome</keyword>
<keyword id="KW-0697">Rotamase</keyword>
<comment type="function">
    <text evidence="1">Involved in protein export. Acts as a chaperone by maintaining the newly synthesized protein in an open conformation. Functions as a peptidyl-prolyl cis-trans isomerase.</text>
</comment>
<comment type="catalytic activity">
    <reaction evidence="1">
        <text>[protein]-peptidylproline (omega=180) = [protein]-peptidylproline (omega=0)</text>
        <dbReference type="Rhea" id="RHEA:16237"/>
        <dbReference type="Rhea" id="RHEA-COMP:10747"/>
        <dbReference type="Rhea" id="RHEA-COMP:10748"/>
        <dbReference type="ChEBI" id="CHEBI:83833"/>
        <dbReference type="ChEBI" id="CHEBI:83834"/>
        <dbReference type="EC" id="5.2.1.8"/>
    </reaction>
</comment>
<comment type="subcellular location">
    <subcellularLocation>
        <location>Cytoplasm</location>
    </subcellularLocation>
    <text evidence="1">About half TF is bound to the ribosome near the polypeptide exit tunnel while the other half is free in the cytoplasm.</text>
</comment>
<comment type="domain">
    <text evidence="1">Consists of 3 domains; the N-terminus binds the ribosome, the middle domain has PPIase activity, while the C-terminus has intrinsic chaperone activity on its own.</text>
</comment>
<comment type="similarity">
    <text evidence="1">Belongs to the FKBP-type PPIase family. Tig subfamily.</text>
</comment>
<accession>B9MG13</accession>